<protein>
    <recommendedName>
        <fullName>Pyrokinin-3</fullName>
        <shortName>Pea-PK-3</shortName>
    </recommendedName>
    <alternativeName>
        <fullName>FXPRL-amide</fullName>
    </alternativeName>
</protein>
<accession>P82618</accession>
<proteinExistence type="evidence at protein level"/>
<dbReference type="GO" id="GO:0005576">
    <property type="term" value="C:extracellular region"/>
    <property type="evidence" value="ECO:0007669"/>
    <property type="project" value="UniProtKB-SubCell"/>
</dbReference>
<dbReference type="GO" id="GO:0007218">
    <property type="term" value="P:neuropeptide signaling pathway"/>
    <property type="evidence" value="ECO:0007669"/>
    <property type="project" value="UniProtKB-KW"/>
</dbReference>
<sequence length="8" mass="997">LVPFRPRL</sequence>
<evidence type="ECO:0000269" key="1">
    <source>
    </source>
</evidence>
<evidence type="ECO:0000269" key="2">
    <source>
    </source>
</evidence>
<evidence type="ECO:0000305" key="3"/>
<organism>
    <name type="scientific">Periplaneta americana</name>
    <name type="common">American cockroach</name>
    <name type="synonym">Blatta americana</name>
    <dbReference type="NCBI Taxonomy" id="6978"/>
    <lineage>
        <taxon>Eukaryota</taxon>
        <taxon>Metazoa</taxon>
        <taxon>Ecdysozoa</taxon>
        <taxon>Arthropoda</taxon>
        <taxon>Hexapoda</taxon>
        <taxon>Insecta</taxon>
        <taxon>Pterygota</taxon>
        <taxon>Neoptera</taxon>
        <taxon>Polyneoptera</taxon>
        <taxon>Dictyoptera</taxon>
        <taxon>Blattodea</taxon>
        <taxon>Blattoidea</taxon>
        <taxon>Blattidae</taxon>
        <taxon>Blattinae</taxon>
        <taxon>Periplaneta</taxon>
    </lineage>
</organism>
<comment type="function">
    <text evidence="1">Mediates visceral muscle contractile activity (myotropic activity).</text>
</comment>
<comment type="subcellular location">
    <subcellularLocation>
        <location>Secreted</location>
    </subcellularLocation>
</comment>
<comment type="tissue specificity">
    <text evidence="2">Corpora cardiaca.</text>
</comment>
<comment type="mass spectrometry" mass="996.5" method="MALDI" evidence="1"/>
<comment type="similarity">
    <text evidence="3">Belongs to the pyrokinin family.</text>
</comment>
<name>PPK3_PERAM</name>
<reference key="1">
    <citation type="journal article" date="1999" name="Insect Biochem. Mol. Biol.">
        <title>Differential distribution of pyrokinin-isoforms in cerebral and abdominal neurohemal organs of the American cockroach.</title>
        <authorList>
            <person name="Predel R."/>
            <person name="Kellner R."/>
            <person name="Nachman R.J."/>
            <person name="Holman G.M."/>
            <person name="Rapus J."/>
            <person name="Gaede G."/>
        </authorList>
    </citation>
    <scope>PROTEIN SEQUENCE</scope>
    <scope>AMIDATION AT LEU-8</scope>
    <scope>FUNCTION</scope>
    <scope>MASS SPECTROMETRY</scope>
    <source>
        <tissue>Retrocerebral complex</tissue>
    </source>
</reference>
<reference key="2">
    <citation type="journal article" date="2000" name="J. Comp. Neurol.">
        <title>Tagma-specific distribution of FXPRLamides in the nervous system of the American cockroach.</title>
        <authorList>
            <person name="Predel R."/>
            <person name="Eckert M."/>
        </authorList>
    </citation>
    <scope>TISSUE SPECIFICITY</scope>
</reference>
<feature type="peptide" id="PRO_0000044324" description="Pyrokinin-3">
    <location>
        <begin position="1"/>
        <end position="8"/>
    </location>
</feature>
<feature type="modified residue" description="Leucine amide" evidence="1">
    <location>
        <position position="8"/>
    </location>
</feature>
<keyword id="KW-0027">Amidation</keyword>
<keyword id="KW-0903">Direct protein sequencing</keyword>
<keyword id="KW-0527">Neuropeptide</keyword>
<keyword id="KW-0964">Secreted</keyword>